<gene>
    <name type="primary">CHRNA1</name>
</gene>
<proteinExistence type="evidence at transcript level"/>
<name>ACHA_NAJNA</name>
<keyword id="KW-1003">Cell membrane</keyword>
<keyword id="KW-1015">Disulfide bond</keyword>
<keyword id="KW-0325">Glycoprotein</keyword>
<keyword id="KW-0407">Ion channel</keyword>
<keyword id="KW-0406">Ion transport</keyword>
<keyword id="KW-1071">Ligand-gated ion channel</keyword>
<keyword id="KW-0472">Membrane</keyword>
<keyword id="KW-0628">Postsynaptic cell membrane</keyword>
<keyword id="KW-0675">Receptor</keyword>
<keyword id="KW-1185">Reference proteome</keyword>
<keyword id="KW-0770">Synapse</keyword>
<keyword id="KW-0813">Transport</keyword>
<sequence>NPPAIFKSYCEIIVTYFPFDEQNCSMKLGTWTYDGTVVAIYPEGPRPDLSNYMQSGEWTLKDYRGFWHSVNYSCCLDTPYLDITYHFILLRLPLYFIVNVIIPC</sequence>
<dbReference type="EMBL" id="M26388">
    <property type="protein sequence ID" value="AAA49384.1"/>
    <property type="molecule type" value="mRNA"/>
</dbReference>
<dbReference type="SMR" id="P14143"/>
<dbReference type="GlyCosmos" id="P14143">
    <property type="glycosylation" value="1 site, No reported glycans"/>
</dbReference>
<dbReference type="OrthoDB" id="5975154at2759"/>
<dbReference type="Proteomes" id="UP000694559">
    <property type="component" value="Unplaced"/>
</dbReference>
<dbReference type="GO" id="GO:0045211">
    <property type="term" value="C:postsynaptic membrane"/>
    <property type="evidence" value="ECO:0007669"/>
    <property type="project" value="UniProtKB-SubCell"/>
</dbReference>
<dbReference type="GO" id="GO:0005230">
    <property type="term" value="F:extracellular ligand-gated monoatomic ion channel activity"/>
    <property type="evidence" value="ECO:0007669"/>
    <property type="project" value="InterPro"/>
</dbReference>
<dbReference type="GO" id="GO:0004888">
    <property type="term" value="F:transmembrane signaling receptor activity"/>
    <property type="evidence" value="ECO:0007669"/>
    <property type="project" value="InterPro"/>
</dbReference>
<dbReference type="FunFam" id="2.70.170.10:FF:000060">
    <property type="entry name" value="Nicotinic acetylcholine receptor subunit alpha4"/>
    <property type="match status" value="1"/>
</dbReference>
<dbReference type="Gene3D" id="2.70.170.10">
    <property type="entry name" value="Neurotransmitter-gated ion-channel ligand-binding domain"/>
    <property type="match status" value="1"/>
</dbReference>
<dbReference type="InterPro" id="IPR006202">
    <property type="entry name" value="Neur_chan_lig-bd"/>
</dbReference>
<dbReference type="InterPro" id="IPR036734">
    <property type="entry name" value="Neur_chan_lig-bd_sf"/>
</dbReference>
<dbReference type="InterPro" id="IPR006201">
    <property type="entry name" value="Neur_channel"/>
</dbReference>
<dbReference type="InterPro" id="IPR018000">
    <property type="entry name" value="Neurotransmitter_ion_chnl_CS"/>
</dbReference>
<dbReference type="PANTHER" id="PTHR18945">
    <property type="entry name" value="NEUROTRANSMITTER GATED ION CHANNEL"/>
    <property type="match status" value="1"/>
</dbReference>
<dbReference type="Pfam" id="PF02931">
    <property type="entry name" value="Neur_chan_LBD"/>
    <property type="match status" value="1"/>
</dbReference>
<dbReference type="PRINTS" id="PR00252">
    <property type="entry name" value="NRIONCHANNEL"/>
</dbReference>
<dbReference type="SUPFAM" id="SSF63712">
    <property type="entry name" value="Nicotinic receptor ligand binding domain-like"/>
    <property type="match status" value="1"/>
</dbReference>
<dbReference type="PROSITE" id="PS00236">
    <property type="entry name" value="NEUROTR_ION_CHANNEL"/>
    <property type="match status" value="1"/>
</dbReference>
<organism>
    <name type="scientific">Naja naja</name>
    <name type="common">Indian cobra</name>
    <dbReference type="NCBI Taxonomy" id="35670"/>
    <lineage>
        <taxon>Eukaryota</taxon>
        <taxon>Metazoa</taxon>
        <taxon>Chordata</taxon>
        <taxon>Craniata</taxon>
        <taxon>Vertebrata</taxon>
        <taxon>Euteleostomi</taxon>
        <taxon>Lepidosauria</taxon>
        <taxon>Squamata</taxon>
        <taxon>Bifurcata</taxon>
        <taxon>Unidentata</taxon>
        <taxon>Episquamata</taxon>
        <taxon>Toxicofera</taxon>
        <taxon>Serpentes</taxon>
        <taxon>Colubroidea</taxon>
        <taxon>Elapidae</taxon>
        <taxon>Elapinae</taxon>
        <taxon>Naja</taxon>
    </lineage>
</organism>
<feature type="chain" id="PRO_0000076975" description="Acetylcholine receptor subunit alpha">
    <location>
        <begin position="1" status="less than"/>
        <end position="104" status="greater than"/>
    </location>
</feature>
<feature type="topological domain" description="Extracellular">
    <location>
        <begin position="1" status="less than"/>
        <end position="104" status="greater than"/>
    </location>
</feature>
<feature type="glycosylation site" description="N-linked (GlcNAc...) asparagine" evidence="5">
    <location>
        <position position="23"/>
    </location>
</feature>
<feature type="disulfide bond" evidence="1">
    <location>
        <begin position="10"/>
        <end position="24"/>
    </location>
</feature>
<feature type="disulfide bond" description="Associated with receptor activation" evidence="1">
    <location>
        <begin position="74"/>
        <end position="75"/>
    </location>
</feature>
<feature type="non-terminal residue">
    <location>
        <position position="1"/>
    </location>
</feature>
<feature type="non-terminal residue">
    <location>
        <position position="104"/>
    </location>
</feature>
<reference key="1">
    <citation type="journal article" date="1989" name="Proc. Natl. Acad. Sci. U.S.A.">
        <title>Snake acetylcholine receptor: cloning of the domain containing the four extracellular cysteines of the alpha subunit.</title>
        <authorList>
            <person name="Neumann D."/>
            <person name="Barchan D."/>
            <person name="Horowitz M."/>
            <person name="Kochva E."/>
            <person name="Fuchs S."/>
        </authorList>
    </citation>
    <scope>NUCLEOTIDE SEQUENCE [MRNA]</scope>
</reference>
<evidence type="ECO:0000250" key="1"/>
<evidence type="ECO:0000250" key="2">
    <source>
        <dbReference type="UniProtKB" id="P02708"/>
    </source>
</evidence>
<evidence type="ECO:0000250" key="3">
    <source>
        <dbReference type="UniProtKB" id="P02709"/>
    </source>
</evidence>
<evidence type="ECO:0000255" key="4"/>
<evidence type="ECO:0000305" key="5"/>
<accession>P14143</accession>
<comment type="function">
    <text evidence="2">Upon acetylcholine binding, the AChR responds by an extensive change in conformation that affects all subunits and leads to opening of an ion-conducting channel across the plasma membrane.</text>
</comment>
<comment type="catalytic activity">
    <reaction evidence="3">
        <text>K(+)(in) = K(+)(out)</text>
        <dbReference type="Rhea" id="RHEA:29463"/>
        <dbReference type="ChEBI" id="CHEBI:29103"/>
    </reaction>
</comment>
<comment type="catalytic activity">
    <reaction evidence="3">
        <text>Na(+)(in) = Na(+)(out)</text>
        <dbReference type="Rhea" id="RHEA:34963"/>
        <dbReference type="ChEBI" id="CHEBI:29101"/>
    </reaction>
</comment>
<comment type="subunit">
    <text evidence="2">One of the alpha chains that assemble within the acetylcholine receptor, a pentamer of two alpha chains, a beta, a delta, and a gamma or epsilon chains.</text>
</comment>
<comment type="subcellular location">
    <subcellularLocation>
        <location evidence="2">Postsynaptic cell membrane</location>
        <topology evidence="4">Multi-pass membrane protein</topology>
    </subcellularLocation>
    <subcellularLocation>
        <location evidence="2">Cell membrane</location>
        <topology evidence="4">Multi-pass membrane protein</topology>
    </subcellularLocation>
</comment>
<comment type="similarity">
    <text evidence="5">Belongs to the ligand-gated ion channel (TC 1.A.9) family. Acetylcholine receptor (TC 1.A.9.1) subfamily. Alpha-1/CHRNA1 sub-subfamily.</text>
</comment>
<protein>
    <recommendedName>
        <fullName>Acetylcholine receptor subunit alpha</fullName>
    </recommendedName>
</protein>